<organism>
    <name type="scientific">Corynebacterium glutamicum</name>
    <name type="common">Brevibacterium saccharolyticum</name>
    <dbReference type="NCBI Taxonomy" id="1718"/>
    <lineage>
        <taxon>Bacteria</taxon>
        <taxon>Bacillati</taxon>
        <taxon>Actinomycetota</taxon>
        <taxon>Actinomycetes</taxon>
        <taxon>Mycobacteriales</taxon>
        <taxon>Corynebacteriaceae</taxon>
        <taxon>Corynebacterium</taxon>
    </lineage>
</organism>
<name>PTG3B_CORGT</name>
<comment type="function">
    <text evidence="1">The phosphoenolpyruvate-dependent sugar phosphotransferase system (sugar PTS), a major carbohydrate active transport system, catalyzes the phosphorylation of incoming sugar substrates concomitantly with their translocation across the cell membrane. This system is involved in glucose transport.</text>
</comment>
<comment type="catalytic activity">
    <reaction evidence="1">
        <text>N(pros)-phospho-L-histidyl-[protein] + D-glucose(out) = D-glucose 6-phosphate(in) + L-histidyl-[protein]</text>
        <dbReference type="Rhea" id="RHEA:33367"/>
        <dbReference type="Rhea" id="RHEA-COMP:9745"/>
        <dbReference type="Rhea" id="RHEA-COMP:9746"/>
        <dbReference type="ChEBI" id="CHEBI:4167"/>
        <dbReference type="ChEBI" id="CHEBI:29979"/>
        <dbReference type="ChEBI" id="CHEBI:61548"/>
        <dbReference type="ChEBI" id="CHEBI:64837"/>
        <dbReference type="EC" id="2.7.1.199"/>
    </reaction>
</comment>
<comment type="subcellular location">
    <subcellularLocation>
        <location evidence="4">Cell membrane</location>
        <topology evidence="4">Multi-pass membrane protein</topology>
    </subcellularLocation>
</comment>
<comment type="domain">
    <text evidence="3">The EIIB domain is phosphorylated by phospho-EIIA on a cysteinyl or histidyl residue, depending on the transported sugar. Then, it transfers the phosphoryl group to the sugar substrate concomitantly with the sugar uptake processed by the EIIC domain.</text>
</comment>
<comment type="domain">
    <text evidence="4">The EIIC domain forms the PTS system translocation channel and contains the specific substrate-binding site.</text>
</comment>
<comment type="domain">
    <text evidence="2">The EIIA domain is phosphorylated by phospho-HPr on a histidyl residue. Then, it transfers the phosphoryl group to the EIIB domain.</text>
</comment>
<feature type="chain" id="PRO_0000186558" description="PTS system glucose-specific EIIBCA component">
    <location>
        <begin position="1"/>
        <end position="674"/>
    </location>
</feature>
<feature type="transmembrane region" description="Helical" evidence="4">
    <location>
        <begin position="126"/>
        <end position="146"/>
    </location>
</feature>
<feature type="transmembrane region" description="Helical" evidence="4">
    <location>
        <begin position="162"/>
        <end position="182"/>
    </location>
</feature>
<feature type="transmembrane region" description="Helical" evidence="4">
    <location>
        <begin position="193"/>
        <end position="213"/>
    </location>
</feature>
<feature type="transmembrane region" description="Helical" evidence="4">
    <location>
        <begin position="225"/>
        <end position="245"/>
    </location>
</feature>
<feature type="transmembrane region" description="Helical" evidence="4">
    <location>
        <begin position="260"/>
        <end position="280"/>
    </location>
</feature>
<feature type="transmembrane region" description="Helical" evidence="4">
    <location>
        <begin position="303"/>
        <end position="323"/>
    </location>
</feature>
<feature type="transmembrane region" description="Helical" evidence="4">
    <location>
        <begin position="344"/>
        <end position="364"/>
    </location>
</feature>
<feature type="transmembrane region" description="Helical" evidence="4">
    <location>
        <begin position="376"/>
        <end position="396"/>
    </location>
</feature>
<feature type="transmembrane region" description="Helical" evidence="4">
    <location>
        <begin position="409"/>
        <end position="429"/>
    </location>
</feature>
<feature type="transmembrane region" description="Helical" evidence="4">
    <location>
        <begin position="442"/>
        <end position="462"/>
    </location>
</feature>
<feature type="domain" description="PTS EIIB type-1" evidence="3">
    <location>
        <begin position="1"/>
        <end position="89"/>
    </location>
</feature>
<feature type="domain" description="PTS EIIC type-1" evidence="4">
    <location>
        <begin position="117"/>
        <end position="476"/>
    </location>
</feature>
<feature type="domain" description="PTS EIIA type-1" evidence="2">
    <location>
        <begin position="542"/>
        <end position="646"/>
    </location>
</feature>
<feature type="active site" description="Phosphocysteine intermediate; for EIIB activity" evidence="3">
    <location>
        <position position="28"/>
    </location>
</feature>
<feature type="active site" description="Tele-phosphohistidine intermediate; for EIIA activity" evidence="2">
    <location>
        <position position="594"/>
    </location>
</feature>
<proteinExistence type="inferred from homology"/>
<keyword id="KW-1003">Cell membrane</keyword>
<keyword id="KW-0418">Kinase</keyword>
<keyword id="KW-0472">Membrane</keyword>
<keyword id="KW-0598">Phosphotransferase system</keyword>
<keyword id="KW-0614">Plasmid</keyword>
<keyword id="KW-0762">Sugar transport</keyword>
<keyword id="KW-0808">Transferase</keyword>
<keyword id="KW-0812">Transmembrane</keyword>
<keyword id="KW-1133">Transmembrane helix</keyword>
<keyword id="KW-0813">Transport</keyword>
<accession>Q45298</accession>
<dbReference type="EC" id="2.7.1.199" evidence="1"/>
<dbReference type="EMBL" id="L18875">
    <property type="protein sequence ID" value="AAA22992.1"/>
    <property type="molecule type" value="Genomic_DNA"/>
</dbReference>
<dbReference type="RefSeq" id="WP_065532562.1">
    <property type="nucleotide sequence ID" value="NZ_AP017557.1"/>
</dbReference>
<dbReference type="SMR" id="Q45298"/>
<dbReference type="GO" id="GO:0005886">
    <property type="term" value="C:plasma membrane"/>
    <property type="evidence" value="ECO:0007669"/>
    <property type="project" value="UniProtKB-SubCell"/>
</dbReference>
<dbReference type="GO" id="GO:0016301">
    <property type="term" value="F:kinase activity"/>
    <property type="evidence" value="ECO:0007669"/>
    <property type="project" value="UniProtKB-KW"/>
</dbReference>
<dbReference type="GO" id="GO:0008982">
    <property type="term" value="F:protein-N(PI)-phosphohistidine-sugar phosphotransferase activity"/>
    <property type="evidence" value="ECO:0007669"/>
    <property type="project" value="InterPro"/>
</dbReference>
<dbReference type="GO" id="GO:0009401">
    <property type="term" value="P:phosphoenolpyruvate-dependent sugar phosphotransferase system"/>
    <property type="evidence" value="ECO:0007669"/>
    <property type="project" value="UniProtKB-KW"/>
</dbReference>
<dbReference type="CDD" id="cd00212">
    <property type="entry name" value="PTS_IIB_glc"/>
    <property type="match status" value="1"/>
</dbReference>
<dbReference type="FunFam" id="2.70.70.10:FF:000001">
    <property type="entry name" value="PTS system glucose-specific IIA component"/>
    <property type="match status" value="1"/>
</dbReference>
<dbReference type="Gene3D" id="2.70.70.10">
    <property type="entry name" value="Glucose Permease (Domain IIA)"/>
    <property type="match status" value="1"/>
</dbReference>
<dbReference type="Gene3D" id="3.30.1360.60">
    <property type="entry name" value="Glucose permease domain IIB"/>
    <property type="match status" value="1"/>
</dbReference>
<dbReference type="InterPro" id="IPR011055">
    <property type="entry name" value="Dup_hybrid_motif"/>
</dbReference>
<dbReference type="InterPro" id="IPR036878">
    <property type="entry name" value="Glu_permease_IIB"/>
</dbReference>
<dbReference type="InterPro" id="IPR018113">
    <property type="entry name" value="PTrfase_EIIB_Cys"/>
</dbReference>
<dbReference type="InterPro" id="IPR001127">
    <property type="entry name" value="PTS_EIIA_1_perm"/>
</dbReference>
<dbReference type="InterPro" id="IPR003352">
    <property type="entry name" value="PTS_EIIC"/>
</dbReference>
<dbReference type="InterPro" id="IPR013013">
    <property type="entry name" value="PTS_EIIC_1"/>
</dbReference>
<dbReference type="InterPro" id="IPR001996">
    <property type="entry name" value="PTS_IIB_1"/>
</dbReference>
<dbReference type="InterPro" id="IPR050558">
    <property type="entry name" value="PTS_Sugar-Specific_Components"/>
</dbReference>
<dbReference type="NCBIfam" id="TIGR00830">
    <property type="entry name" value="PTBA"/>
    <property type="match status" value="1"/>
</dbReference>
<dbReference type="PANTHER" id="PTHR30175">
    <property type="entry name" value="PHOSPHOTRANSFERASE SYSTEM TRANSPORT PROTEIN"/>
    <property type="match status" value="1"/>
</dbReference>
<dbReference type="PANTHER" id="PTHR30175:SF1">
    <property type="entry name" value="PTS SYSTEM ARBUTIN-, CELLOBIOSE-, AND SALICIN-SPECIFIC EIIBC COMPONENT-RELATED"/>
    <property type="match status" value="1"/>
</dbReference>
<dbReference type="Pfam" id="PF00358">
    <property type="entry name" value="PTS_EIIA_1"/>
    <property type="match status" value="1"/>
</dbReference>
<dbReference type="Pfam" id="PF00367">
    <property type="entry name" value="PTS_EIIB"/>
    <property type="match status" value="1"/>
</dbReference>
<dbReference type="Pfam" id="PF02378">
    <property type="entry name" value="PTS_EIIC"/>
    <property type="match status" value="1"/>
</dbReference>
<dbReference type="SUPFAM" id="SSF51261">
    <property type="entry name" value="Duplicated hybrid motif"/>
    <property type="match status" value="1"/>
</dbReference>
<dbReference type="SUPFAM" id="SSF55604">
    <property type="entry name" value="Glucose permease domain IIB"/>
    <property type="match status" value="1"/>
</dbReference>
<dbReference type="PROSITE" id="PS51093">
    <property type="entry name" value="PTS_EIIA_TYPE_1"/>
    <property type="match status" value="1"/>
</dbReference>
<dbReference type="PROSITE" id="PS00371">
    <property type="entry name" value="PTS_EIIA_TYPE_1_HIS"/>
    <property type="match status" value="1"/>
</dbReference>
<dbReference type="PROSITE" id="PS51098">
    <property type="entry name" value="PTS_EIIB_TYPE_1"/>
    <property type="match status" value="1"/>
</dbReference>
<dbReference type="PROSITE" id="PS01035">
    <property type="entry name" value="PTS_EIIB_TYPE_1_CYS"/>
    <property type="match status" value="1"/>
</dbReference>
<dbReference type="PROSITE" id="PS51103">
    <property type="entry name" value="PTS_EIIC_TYPE_1"/>
    <property type="match status" value="1"/>
</dbReference>
<evidence type="ECO:0000250" key="1">
    <source>
        <dbReference type="UniProtKB" id="Q57071"/>
    </source>
</evidence>
<evidence type="ECO:0000255" key="2">
    <source>
        <dbReference type="PROSITE-ProRule" id="PRU00416"/>
    </source>
</evidence>
<evidence type="ECO:0000255" key="3">
    <source>
        <dbReference type="PROSITE-ProRule" id="PRU00421"/>
    </source>
</evidence>
<evidence type="ECO:0000255" key="4">
    <source>
        <dbReference type="PROSITE-ProRule" id="PRU00426"/>
    </source>
</evidence>
<geneLocation type="plasmid">
    <name>pBSBG2</name>
</geneLocation>
<protein>
    <recommendedName>
        <fullName evidence="1">PTS system glucose-specific EIIBCA component</fullName>
    </recommendedName>
    <alternativeName>
        <fullName evidence="1">EII-Glc/EIII-Glc</fullName>
    </alternativeName>
    <alternativeName>
        <fullName evidence="1">EIIBCA-Glc</fullName>
    </alternativeName>
    <domain>
        <recommendedName>
            <fullName evidence="1">Glucose-specific phosphotransferase enzyme IIB component</fullName>
            <ecNumber evidence="1">2.7.1.199</ecNumber>
        </recommendedName>
        <alternativeName>
            <fullName evidence="1">PTS system glucose-specific EIIB component</fullName>
        </alternativeName>
    </domain>
    <domain>
        <recommendedName>
            <fullName evidence="1">Glucose permease IIC component</fullName>
        </recommendedName>
        <alternativeName>
            <fullName evidence="1">PTS system glucose-specific EIIC component</fullName>
        </alternativeName>
    </domain>
    <domain>
        <recommendedName>
            <fullName evidence="1">Glucose-specific phosphotransferase enzyme IIA component</fullName>
        </recommendedName>
        <alternativeName>
            <fullName evidence="1">PTS system glucose-specific EIIA component</fullName>
        </alternativeName>
    </domain>
</protein>
<reference key="1">
    <citation type="submission" date="1993-11" db="EMBL/GenBank/DDBJ databases">
        <title>Cloning and nucleotide sequence of enzyme II of Brevibacterium lactofermentum phosphotransferase system.</title>
        <authorList>
            <person name="Yoon K.-H."/>
        </authorList>
    </citation>
    <scope>NUCLEOTIDE SEQUENCE [GENOMIC DNA]</scope>
    <source>
        <strain>ATCC 13869 / DSM 1412 / NCIMB 9567 / 2256</strain>
    </source>
</reference>
<gene>
    <name type="primary">ptsG</name>
</gene>
<sequence length="674" mass="71626">MASKLTTTSQHILENLGGPDNITSMTHCATRLRFQVKDQSIVDQQEIDSDPSVLGVVPQGSTGMQVVMGGSVANYYQEILKLDGMKHFADGEATESSSKKEYGGVRGKYSGIDYAFEFLSDTFRPILWALLGASLIITLLVLADTFGLQDFRAPMDEQPDTYVFLHSMWRSVFYFLPIMVGATAARKLGANEWIGAAIPAALLTPEFLALGSAGDTVTVFGLPMVLNDYSGQVFPPLIAAIGLYWVEKALKKIIPEAVQMVFVPFFSLLIMIPATAFLLGPFGIGVGNGISSLLEAVNNFSPFILSIVIPLLYPFLVPLGLHWPLNAIMIQNLNTLGYDFIQGPMGAWNFACFGLVTGVFLIALKEKNRAMRQVSLGGMLAGLLGGISEPSLYGVLLRFKKTYFRLLPGCLVGGIVMGIFDIKAYAFVFTSLLTIPAMDPWLGYTVGIAAAFFTSMLLVLFFDYRSDAERDEAKAQMAAAEQTNNTPAAPAAPVAPAAGAAAAGGAAGATAVATKPRLAAGQLVEITSPLEGHAVPLSEVPDPIFAAGKLGPGIAIEPTGNTVVAPADATVILVQKSGHAVALRLESGVELLIHIGLDTVQLGGEGFKVHVERKQQVKAGDPLITFDPEFIRSKNLPLITPVVVSNANKFGEIVGIEAAQADATTTVIKVNGAE</sequence>